<gene>
    <name type="primary">Znf746</name>
    <name type="synonym">Zfp746</name>
</gene>
<dbReference type="EMBL" id="AK156312">
    <property type="protein sequence ID" value="BAE33667.1"/>
    <property type="status" value="ALT_INIT"/>
    <property type="molecule type" value="mRNA"/>
</dbReference>
<dbReference type="EMBL" id="AC166290">
    <property type="status" value="NOT_ANNOTATED_CDS"/>
    <property type="molecule type" value="Genomic_DNA"/>
</dbReference>
<dbReference type="CCDS" id="CCDS51762.1"/>
<dbReference type="RefSeq" id="NP_001156947.1">
    <property type="nucleotide sequence ID" value="NM_001163475.1"/>
</dbReference>
<dbReference type="BioGRID" id="213305">
    <property type="interactions" value="15"/>
</dbReference>
<dbReference type="FunCoup" id="Q3U133">
    <property type="interactions" value="2291"/>
</dbReference>
<dbReference type="IntAct" id="Q3U133">
    <property type="interactions" value="1"/>
</dbReference>
<dbReference type="STRING" id="10090.ENSMUSP00000072868"/>
<dbReference type="iPTMnet" id="Q3U133"/>
<dbReference type="PhosphoSitePlus" id="Q3U133"/>
<dbReference type="PaxDb" id="10090-ENSMUSP00000072868"/>
<dbReference type="PeptideAtlas" id="Q3U133"/>
<dbReference type="ProteomicsDB" id="275298"/>
<dbReference type="Pumba" id="Q3U133"/>
<dbReference type="ABCD" id="Q3U133">
    <property type="antibodies" value="1 sequenced antibody"/>
</dbReference>
<dbReference type="Antibodypedia" id="46329">
    <property type="antibodies" value="66 antibodies from 20 providers"/>
</dbReference>
<dbReference type="Ensembl" id="ENSMUST00000073124.9">
    <property type="protein sequence ID" value="ENSMUSP00000072868.7"/>
    <property type="gene ID" value="ENSMUSG00000057691.9"/>
</dbReference>
<dbReference type="GeneID" id="69228"/>
<dbReference type="KEGG" id="mmu:69228"/>
<dbReference type="UCSC" id="uc009btv.2">
    <property type="organism name" value="mouse"/>
</dbReference>
<dbReference type="AGR" id="MGI:1916478"/>
<dbReference type="CTD" id="69228"/>
<dbReference type="MGI" id="MGI:1916478">
    <property type="gene designation" value="Zfp746"/>
</dbReference>
<dbReference type="VEuPathDB" id="HostDB:ENSMUSG00000057691"/>
<dbReference type="eggNOG" id="KOG1721">
    <property type="taxonomic scope" value="Eukaryota"/>
</dbReference>
<dbReference type="GeneTree" id="ENSGT00940000161747"/>
<dbReference type="HOGENOM" id="CLU_002678_76_3_1"/>
<dbReference type="InParanoid" id="Q3U133"/>
<dbReference type="OMA" id="PEPCKYP"/>
<dbReference type="OrthoDB" id="654211at2759"/>
<dbReference type="PhylomeDB" id="Q3U133"/>
<dbReference type="TreeFam" id="TF337777"/>
<dbReference type="Reactome" id="R-MMU-212436">
    <property type="pathway name" value="Generic Transcription Pathway"/>
</dbReference>
<dbReference type="BioGRID-ORCS" id="69228">
    <property type="hits" value="4 hits in 78 CRISPR screens"/>
</dbReference>
<dbReference type="ChiTaRS" id="Zfp746">
    <property type="organism name" value="mouse"/>
</dbReference>
<dbReference type="PRO" id="PR:Q3U133"/>
<dbReference type="Proteomes" id="UP000000589">
    <property type="component" value="Chromosome 6"/>
</dbReference>
<dbReference type="RNAct" id="Q3U133">
    <property type="molecule type" value="protein"/>
</dbReference>
<dbReference type="Bgee" id="ENSMUSG00000057691">
    <property type="expression patterns" value="Expressed in otic placode and 249 other cell types or tissues"/>
</dbReference>
<dbReference type="ExpressionAtlas" id="Q3U133">
    <property type="expression patterns" value="baseline and differential"/>
</dbReference>
<dbReference type="GO" id="GO:0005737">
    <property type="term" value="C:cytoplasm"/>
    <property type="evidence" value="ECO:0000250"/>
    <property type="project" value="UniProtKB"/>
</dbReference>
<dbReference type="GO" id="GO:0005829">
    <property type="term" value="C:cytosol"/>
    <property type="evidence" value="ECO:0007669"/>
    <property type="project" value="Ensembl"/>
</dbReference>
<dbReference type="GO" id="GO:0005654">
    <property type="term" value="C:nucleoplasm"/>
    <property type="evidence" value="ECO:0007669"/>
    <property type="project" value="Ensembl"/>
</dbReference>
<dbReference type="GO" id="GO:0000976">
    <property type="term" value="F:transcription cis-regulatory region binding"/>
    <property type="evidence" value="ECO:0000250"/>
    <property type="project" value="UniProtKB"/>
</dbReference>
<dbReference type="GO" id="GO:0031625">
    <property type="term" value="F:ubiquitin protein ligase binding"/>
    <property type="evidence" value="ECO:0000353"/>
    <property type="project" value="UniProtKB"/>
</dbReference>
<dbReference type="GO" id="GO:0008270">
    <property type="term" value="F:zinc ion binding"/>
    <property type="evidence" value="ECO:0007669"/>
    <property type="project" value="UniProtKB-KW"/>
</dbReference>
<dbReference type="GO" id="GO:0045892">
    <property type="term" value="P:negative regulation of DNA-templated transcription"/>
    <property type="evidence" value="ECO:0000250"/>
    <property type="project" value="UniProtKB"/>
</dbReference>
<dbReference type="GO" id="GO:0000122">
    <property type="term" value="P:negative regulation of transcription by RNA polymerase II"/>
    <property type="evidence" value="ECO:0000314"/>
    <property type="project" value="ParkinsonsUK-UCL"/>
</dbReference>
<dbReference type="GO" id="GO:0051291">
    <property type="term" value="P:protein heterooligomerization"/>
    <property type="evidence" value="ECO:0000250"/>
    <property type="project" value="UniProtKB"/>
</dbReference>
<dbReference type="GO" id="GO:0051260">
    <property type="term" value="P:protein homooligomerization"/>
    <property type="evidence" value="ECO:0000250"/>
    <property type="project" value="UniProtKB"/>
</dbReference>
<dbReference type="CDD" id="cd07765">
    <property type="entry name" value="KRAB_A-box"/>
    <property type="match status" value="1"/>
</dbReference>
<dbReference type="FunFam" id="3.30.160.60:FF:001063">
    <property type="entry name" value="zinc finger protein 746 isoform X1"/>
    <property type="match status" value="1"/>
</dbReference>
<dbReference type="FunFam" id="3.30.160.60:FF:001242">
    <property type="entry name" value="zinc finger protein 746 isoform X1"/>
    <property type="match status" value="1"/>
</dbReference>
<dbReference type="FunFam" id="3.30.160.60:FF:001364">
    <property type="entry name" value="zinc finger protein 746 isoform X1"/>
    <property type="match status" value="1"/>
</dbReference>
<dbReference type="FunFam" id="3.30.160.60:FF:000336">
    <property type="entry name" value="zinc finger protein 768"/>
    <property type="match status" value="1"/>
</dbReference>
<dbReference type="Gene3D" id="6.10.140.140">
    <property type="match status" value="1"/>
</dbReference>
<dbReference type="Gene3D" id="3.30.160.60">
    <property type="entry name" value="Classic Zinc Finger"/>
    <property type="match status" value="4"/>
</dbReference>
<dbReference type="InterPro" id="IPR001909">
    <property type="entry name" value="KRAB"/>
</dbReference>
<dbReference type="InterPro" id="IPR036051">
    <property type="entry name" value="KRAB_dom_sf"/>
</dbReference>
<dbReference type="InterPro" id="IPR036236">
    <property type="entry name" value="Znf_C2H2_sf"/>
</dbReference>
<dbReference type="InterPro" id="IPR013087">
    <property type="entry name" value="Znf_C2H2_type"/>
</dbReference>
<dbReference type="PANTHER" id="PTHR24381:SF393">
    <property type="entry name" value="CHROMATIN-LINKED ADAPTOR FOR MSL PROTEINS, ISOFORM B"/>
    <property type="match status" value="1"/>
</dbReference>
<dbReference type="PANTHER" id="PTHR24381">
    <property type="entry name" value="ZINC FINGER PROTEIN"/>
    <property type="match status" value="1"/>
</dbReference>
<dbReference type="Pfam" id="PF01352">
    <property type="entry name" value="KRAB"/>
    <property type="match status" value="1"/>
</dbReference>
<dbReference type="Pfam" id="PF00096">
    <property type="entry name" value="zf-C2H2"/>
    <property type="match status" value="4"/>
</dbReference>
<dbReference type="SMART" id="SM00349">
    <property type="entry name" value="KRAB"/>
    <property type="match status" value="1"/>
</dbReference>
<dbReference type="SMART" id="SM00355">
    <property type="entry name" value="ZnF_C2H2"/>
    <property type="match status" value="4"/>
</dbReference>
<dbReference type="SUPFAM" id="SSF57667">
    <property type="entry name" value="beta-beta-alpha zinc fingers"/>
    <property type="match status" value="3"/>
</dbReference>
<dbReference type="SUPFAM" id="SSF109640">
    <property type="entry name" value="KRAB domain (Kruppel-associated box)"/>
    <property type="match status" value="1"/>
</dbReference>
<dbReference type="PROSITE" id="PS50805">
    <property type="entry name" value="KRAB"/>
    <property type="match status" value="1"/>
</dbReference>
<dbReference type="PROSITE" id="PS00028">
    <property type="entry name" value="ZINC_FINGER_C2H2_1"/>
    <property type="match status" value="3"/>
</dbReference>
<dbReference type="PROSITE" id="PS50157">
    <property type="entry name" value="ZINC_FINGER_C2H2_2"/>
    <property type="match status" value="4"/>
</dbReference>
<organism>
    <name type="scientific">Mus musculus</name>
    <name type="common">Mouse</name>
    <dbReference type="NCBI Taxonomy" id="10090"/>
    <lineage>
        <taxon>Eukaryota</taxon>
        <taxon>Metazoa</taxon>
        <taxon>Chordata</taxon>
        <taxon>Craniata</taxon>
        <taxon>Vertebrata</taxon>
        <taxon>Euteleostomi</taxon>
        <taxon>Mammalia</taxon>
        <taxon>Eutheria</taxon>
        <taxon>Euarchontoglires</taxon>
        <taxon>Glires</taxon>
        <taxon>Rodentia</taxon>
        <taxon>Myomorpha</taxon>
        <taxon>Muroidea</taxon>
        <taxon>Muridae</taxon>
        <taxon>Murinae</taxon>
        <taxon>Mus</taxon>
        <taxon>Mus</taxon>
    </lineage>
</organism>
<feature type="chain" id="PRO_0000253729" description="Zinc finger protein 746">
    <location>
        <begin position="1"/>
        <end position="652"/>
    </location>
</feature>
<feature type="domain" description="KRAB" evidence="5">
    <location>
        <begin position="96"/>
        <end position="167"/>
    </location>
</feature>
<feature type="zinc finger region" description="C2H2-type 1; degenerate" evidence="4">
    <location>
        <begin position="454"/>
        <end position="479"/>
    </location>
</feature>
<feature type="zinc finger region" description="C2H2-type 2" evidence="4">
    <location>
        <begin position="517"/>
        <end position="539"/>
    </location>
</feature>
<feature type="zinc finger region" description="C2H2-type 3" evidence="4">
    <location>
        <begin position="545"/>
        <end position="567"/>
    </location>
</feature>
<feature type="zinc finger region" description="C2H2-type 4" evidence="4">
    <location>
        <begin position="573"/>
        <end position="595"/>
    </location>
</feature>
<feature type="region of interest" description="Disordered" evidence="6">
    <location>
        <begin position="155"/>
        <end position="175"/>
    </location>
</feature>
<feature type="region of interest" description="Disordered" evidence="6">
    <location>
        <begin position="480"/>
        <end position="510"/>
    </location>
</feature>
<feature type="region of interest" description="Disordered" evidence="6">
    <location>
        <begin position="592"/>
        <end position="627"/>
    </location>
</feature>
<feature type="coiled-coil region" evidence="3">
    <location>
        <begin position="16"/>
        <end position="92"/>
    </location>
</feature>
<feature type="compositionally biased region" description="Low complexity" evidence="6">
    <location>
        <begin position="481"/>
        <end position="490"/>
    </location>
</feature>
<feature type="compositionally biased region" description="Gly residues" evidence="6">
    <location>
        <begin position="491"/>
        <end position="509"/>
    </location>
</feature>
<feature type="compositionally biased region" description="Pro residues" evidence="6">
    <location>
        <begin position="607"/>
        <end position="618"/>
    </location>
</feature>
<feature type="cross-link" description="Glycyl lysine isopeptide (Lys-Gly) (interchain with G-Cter in SUMO2)" evidence="2">
    <location>
        <position position="283"/>
    </location>
</feature>
<feature type="cross-link" description="Glycyl lysine isopeptide (Lys-Gly) (interchain with G-Cter in SUMO2)" evidence="2">
    <location>
        <position position="287"/>
    </location>
</feature>
<feature type="sequence conflict" description="In Ref. 1; BAE33667." evidence="8" ref="1">
    <original>T</original>
    <variation>A</variation>
    <location>
        <position position="490"/>
    </location>
</feature>
<accession>Q3U133</accession>
<accession>E9QPR1</accession>
<evidence type="ECO:0000250" key="1"/>
<evidence type="ECO:0000250" key="2">
    <source>
        <dbReference type="UniProtKB" id="Q6NUN9"/>
    </source>
</evidence>
<evidence type="ECO:0000255" key="3"/>
<evidence type="ECO:0000255" key="4">
    <source>
        <dbReference type="PROSITE-ProRule" id="PRU00042"/>
    </source>
</evidence>
<evidence type="ECO:0000255" key="5">
    <source>
        <dbReference type="PROSITE-ProRule" id="PRU00119"/>
    </source>
</evidence>
<evidence type="ECO:0000256" key="6">
    <source>
        <dbReference type="SAM" id="MobiDB-lite"/>
    </source>
</evidence>
<evidence type="ECO:0000269" key="7">
    <source>
    </source>
</evidence>
<evidence type="ECO:0000305" key="8"/>
<comment type="function">
    <text evidence="2">Transcription repressor that specifically binds to the 5'-TATTTT[T/G]-3' consensus sequence on promoters and repress transcription of PGC-1-alpha (PPARGC1A), thereby playing a role in regulation of neuron death.</text>
</comment>
<comment type="subunit">
    <text evidence="2 7">Interacts (via C2H2-type zinc fingers) with PRKN (PubMed:21376232). Interacts with TRIM28 (By similarity).</text>
</comment>
<comment type="interaction">
    <interactant intactId="EBI-3862590">
        <id>Q3U133</id>
    </interactant>
    <interactant intactId="EBI-973635">
        <id>Q9WVS6</id>
        <label>Prkn</label>
    </interactant>
    <organismsDiffer>false</organismsDiffer>
    <experiments>2</experiments>
</comment>
<comment type="subcellular location">
    <subcellularLocation>
        <location evidence="1">Cytoplasm</location>
    </subcellularLocation>
    <subcellularLocation>
        <location evidence="1">Nucleus</location>
    </subcellularLocation>
    <text evidence="1">Mainly localizes to the cytoplasm; probably translocates to the nucleus to repress selected genes.</text>
</comment>
<comment type="tissue specificity">
    <text evidence="7">Widely expressed. In brain, it is heterogeneously distributed throughout the brain and localizes to neurons, including substantia nigra pars compacta dopamine-containing neurons. Weakly expressed in cerebellum and midbrain (at protein level).</text>
</comment>
<comment type="PTM">
    <text evidence="1">Ubiquitinated by PRKN. 'Lys-48'-linked polyubiquitination by PRKN leads to degradation by the proteasome and may play a key role in regulation of neuron death (By similarity).</text>
</comment>
<comment type="similarity">
    <text evidence="8">Belongs to the krueppel C2H2-type zinc-finger protein family.</text>
</comment>
<comment type="sequence caution" evidence="8">
    <conflict type="erroneous initiation">
        <sequence resource="EMBL-CDS" id="BAE33667"/>
    </conflict>
    <text>Extended N-terminus.</text>
</comment>
<protein>
    <recommendedName>
        <fullName>Zinc finger protein 746</fullName>
    </recommendedName>
</protein>
<keyword id="KW-0175">Coiled coil</keyword>
<keyword id="KW-0963">Cytoplasm</keyword>
<keyword id="KW-0238">DNA-binding</keyword>
<keyword id="KW-1017">Isopeptide bond</keyword>
<keyword id="KW-0479">Metal-binding</keyword>
<keyword id="KW-0539">Nucleus</keyword>
<keyword id="KW-1185">Reference proteome</keyword>
<keyword id="KW-0677">Repeat</keyword>
<keyword id="KW-0678">Repressor</keyword>
<keyword id="KW-0804">Transcription</keyword>
<keyword id="KW-0805">Transcription regulation</keyword>
<keyword id="KW-0832">Ubl conjugation</keyword>
<keyword id="KW-0862">Zinc</keyword>
<keyword id="KW-0863">Zinc-finger</keyword>
<reference key="1">
    <citation type="journal article" date="2005" name="Science">
        <title>The transcriptional landscape of the mammalian genome.</title>
        <authorList>
            <person name="Carninci P."/>
            <person name="Kasukawa T."/>
            <person name="Katayama S."/>
            <person name="Gough J."/>
            <person name="Frith M.C."/>
            <person name="Maeda N."/>
            <person name="Oyama R."/>
            <person name="Ravasi T."/>
            <person name="Lenhard B."/>
            <person name="Wells C."/>
            <person name="Kodzius R."/>
            <person name="Shimokawa K."/>
            <person name="Bajic V.B."/>
            <person name="Brenner S.E."/>
            <person name="Batalov S."/>
            <person name="Forrest A.R."/>
            <person name="Zavolan M."/>
            <person name="Davis M.J."/>
            <person name="Wilming L.G."/>
            <person name="Aidinis V."/>
            <person name="Allen J.E."/>
            <person name="Ambesi-Impiombato A."/>
            <person name="Apweiler R."/>
            <person name="Aturaliya R.N."/>
            <person name="Bailey T.L."/>
            <person name="Bansal M."/>
            <person name="Baxter L."/>
            <person name="Beisel K.W."/>
            <person name="Bersano T."/>
            <person name="Bono H."/>
            <person name="Chalk A.M."/>
            <person name="Chiu K.P."/>
            <person name="Choudhary V."/>
            <person name="Christoffels A."/>
            <person name="Clutterbuck D.R."/>
            <person name="Crowe M.L."/>
            <person name="Dalla E."/>
            <person name="Dalrymple B.P."/>
            <person name="de Bono B."/>
            <person name="Della Gatta G."/>
            <person name="di Bernardo D."/>
            <person name="Down T."/>
            <person name="Engstrom P."/>
            <person name="Fagiolini M."/>
            <person name="Faulkner G."/>
            <person name="Fletcher C.F."/>
            <person name="Fukushima T."/>
            <person name="Furuno M."/>
            <person name="Futaki S."/>
            <person name="Gariboldi M."/>
            <person name="Georgii-Hemming P."/>
            <person name="Gingeras T.R."/>
            <person name="Gojobori T."/>
            <person name="Green R.E."/>
            <person name="Gustincich S."/>
            <person name="Harbers M."/>
            <person name="Hayashi Y."/>
            <person name="Hensch T.K."/>
            <person name="Hirokawa N."/>
            <person name="Hill D."/>
            <person name="Huminiecki L."/>
            <person name="Iacono M."/>
            <person name="Ikeo K."/>
            <person name="Iwama A."/>
            <person name="Ishikawa T."/>
            <person name="Jakt M."/>
            <person name="Kanapin A."/>
            <person name="Katoh M."/>
            <person name="Kawasawa Y."/>
            <person name="Kelso J."/>
            <person name="Kitamura H."/>
            <person name="Kitano H."/>
            <person name="Kollias G."/>
            <person name="Krishnan S.P."/>
            <person name="Kruger A."/>
            <person name="Kummerfeld S.K."/>
            <person name="Kurochkin I.V."/>
            <person name="Lareau L.F."/>
            <person name="Lazarevic D."/>
            <person name="Lipovich L."/>
            <person name="Liu J."/>
            <person name="Liuni S."/>
            <person name="McWilliam S."/>
            <person name="Madan Babu M."/>
            <person name="Madera M."/>
            <person name="Marchionni L."/>
            <person name="Matsuda H."/>
            <person name="Matsuzawa S."/>
            <person name="Miki H."/>
            <person name="Mignone F."/>
            <person name="Miyake S."/>
            <person name="Morris K."/>
            <person name="Mottagui-Tabar S."/>
            <person name="Mulder N."/>
            <person name="Nakano N."/>
            <person name="Nakauchi H."/>
            <person name="Ng P."/>
            <person name="Nilsson R."/>
            <person name="Nishiguchi S."/>
            <person name="Nishikawa S."/>
            <person name="Nori F."/>
            <person name="Ohara O."/>
            <person name="Okazaki Y."/>
            <person name="Orlando V."/>
            <person name="Pang K.C."/>
            <person name="Pavan W.J."/>
            <person name="Pavesi G."/>
            <person name="Pesole G."/>
            <person name="Petrovsky N."/>
            <person name="Piazza S."/>
            <person name="Reed J."/>
            <person name="Reid J.F."/>
            <person name="Ring B.Z."/>
            <person name="Ringwald M."/>
            <person name="Rost B."/>
            <person name="Ruan Y."/>
            <person name="Salzberg S.L."/>
            <person name="Sandelin A."/>
            <person name="Schneider C."/>
            <person name="Schoenbach C."/>
            <person name="Sekiguchi K."/>
            <person name="Semple C.A."/>
            <person name="Seno S."/>
            <person name="Sessa L."/>
            <person name="Sheng Y."/>
            <person name="Shibata Y."/>
            <person name="Shimada H."/>
            <person name="Shimada K."/>
            <person name="Silva D."/>
            <person name="Sinclair B."/>
            <person name="Sperling S."/>
            <person name="Stupka E."/>
            <person name="Sugiura K."/>
            <person name="Sultana R."/>
            <person name="Takenaka Y."/>
            <person name="Taki K."/>
            <person name="Tammoja K."/>
            <person name="Tan S.L."/>
            <person name="Tang S."/>
            <person name="Taylor M.S."/>
            <person name="Tegner J."/>
            <person name="Teichmann S.A."/>
            <person name="Ueda H.R."/>
            <person name="van Nimwegen E."/>
            <person name="Verardo R."/>
            <person name="Wei C.L."/>
            <person name="Yagi K."/>
            <person name="Yamanishi H."/>
            <person name="Zabarovsky E."/>
            <person name="Zhu S."/>
            <person name="Zimmer A."/>
            <person name="Hide W."/>
            <person name="Bult C."/>
            <person name="Grimmond S.M."/>
            <person name="Teasdale R.D."/>
            <person name="Liu E.T."/>
            <person name="Brusic V."/>
            <person name="Quackenbush J."/>
            <person name="Wahlestedt C."/>
            <person name="Mattick J.S."/>
            <person name="Hume D.A."/>
            <person name="Kai C."/>
            <person name="Sasaki D."/>
            <person name="Tomaru Y."/>
            <person name="Fukuda S."/>
            <person name="Kanamori-Katayama M."/>
            <person name="Suzuki M."/>
            <person name="Aoki J."/>
            <person name="Arakawa T."/>
            <person name="Iida J."/>
            <person name="Imamura K."/>
            <person name="Itoh M."/>
            <person name="Kato T."/>
            <person name="Kawaji H."/>
            <person name="Kawagashira N."/>
            <person name="Kawashima T."/>
            <person name="Kojima M."/>
            <person name="Kondo S."/>
            <person name="Konno H."/>
            <person name="Nakano K."/>
            <person name="Ninomiya N."/>
            <person name="Nishio T."/>
            <person name="Okada M."/>
            <person name="Plessy C."/>
            <person name="Shibata K."/>
            <person name="Shiraki T."/>
            <person name="Suzuki S."/>
            <person name="Tagami M."/>
            <person name="Waki K."/>
            <person name="Watahiki A."/>
            <person name="Okamura-Oho Y."/>
            <person name="Suzuki H."/>
            <person name="Kawai J."/>
            <person name="Hayashizaki Y."/>
        </authorList>
    </citation>
    <scope>NUCLEOTIDE SEQUENCE [LARGE SCALE MRNA]</scope>
    <source>
        <strain>NOD</strain>
        <tissue>Spleen</tissue>
    </source>
</reference>
<reference key="2">
    <citation type="journal article" date="2009" name="PLoS Biol.">
        <title>Lineage-specific biology revealed by a finished genome assembly of the mouse.</title>
        <authorList>
            <person name="Church D.M."/>
            <person name="Goodstadt L."/>
            <person name="Hillier L.W."/>
            <person name="Zody M.C."/>
            <person name="Goldstein S."/>
            <person name="She X."/>
            <person name="Bult C.J."/>
            <person name="Agarwala R."/>
            <person name="Cherry J.L."/>
            <person name="DiCuccio M."/>
            <person name="Hlavina W."/>
            <person name="Kapustin Y."/>
            <person name="Meric P."/>
            <person name="Maglott D."/>
            <person name="Birtle Z."/>
            <person name="Marques A.C."/>
            <person name="Graves T."/>
            <person name="Zhou S."/>
            <person name="Teague B."/>
            <person name="Potamousis K."/>
            <person name="Churas C."/>
            <person name="Place M."/>
            <person name="Herschleb J."/>
            <person name="Runnheim R."/>
            <person name="Forrest D."/>
            <person name="Amos-Landgraf J."/>
            <person name="Schwartz D.C."/>
            <person name="Cheng Z."/>
            <person name="Lindblad-Toh K."/>
            <person name="Eichler E.E."/>
            <person name="Ponting C.P."/>
        </authorList>
    </citation>
    <scope>NUCLEOTIDE SEQUENCE [LARGE SCALE GENOMIC DNA]</scope>
    <source>
        <strain>C57BL/6J</strain>
    </source>
</reference>
<reference key="3">
    <citation type="journal article" date="2011" name="Cell">
        <title>PARIS (ZNF746) repression of PGC-1alpha contributes to neurodegeneration in Parkinson's disease.</title>
        <authorList>
            <person name="Shin J.H."/>
            <person name="Ko H.S."/>
            <person name="Kang H."/>
            <person name="Lee Y."/>
            <person name="Lee Y.I."/>
            <person name="Pletinkova O."/>
            <person name="Troconso J.C."/>
            <person name="Dawson V.L."/>
            <person name="Dawson T.M."/>
        </authorList>
    </citation>
    <scope>TISSUE SPECIFICITY</scope>
    <scope>INTERACTION WITH PRKN</scope>
</reference>
<sequence length="652" mass="69821">MAEAAAAPISPWTMAATIQAMERKIESQAARLLSLEGRTGMAEKKLADCEKTAVEFSNQLEGKWAVLGTLLQEYGLLQRRLENVENLLRNRNFWILRLPPGSKGEVPKEWGKLEDWQKELYKHVMRGNYETLVSLDYAISKPEVLSQIEQGKEPCTWRRTGPKVPEVPVDPSPGSGAPVPAPDLLMQIKQEGELQLQEQQALGVEAWAAGQPDIGEEPWGLSQLDSGAGDISTDATSGVHSNFSTTIPPTSWQADLPPHHPSSACSDGTLKLNTAASTEADVKIVIKTEVQEEEVVATPVHPTDLEAHGTLFAPGQATRFFPSPVQEGAWESQGSSFPSQDPVLGLREPTRPERDIGELSPAIAQEEAPAGDWLFGGVRWGWNFRCKPPVGLNPRTVPEGLPFSSPDNGEAILDPSQAPRPFNDPCKYPGRTKGFGHKPGLKKHPAAPPGGRPFTCATCGKSFQLQVSLSAHQRSCGLSDGAATGAASTTTGGGGGGSGGGGGSSGGGSSARDSSALRCGECGRCFTRPAHLIRHRMLHTGERPFPCTECEKRFTERSKLIDHYRTHTGVRPFTCTVCGKSFIRKDHLRKHQRNHPAVAKAPAHGQPLPPLPAPPDPFKSPAAKGPMASTDLVTDWTCGLSVLGPSDGGGDL</sequence>
<name>ZN746_MOUSE</name>
<proteinExistence type="evidence at protein level"/>